<dbReference type="EC" id="3.4.19.3"/>
<dbReference type="EMBL" id="U19770">
    <property type="protein sequence ID" value="AAA99709.1"/>
    <property type="molecule type" value="Genomic_DNA"/>
</dbReference>
<dbReference type="PIR" id="JC4511">
    <property type="entry name" value="JC4511"/>
</dbReference>
<dbReference type="SMR" id="Q53596"/>
<dbReference type="MEROPS" id="C15.001"/>
<dbReference type="BioCyc" id="MetaCyc:MONOMER-20361"/>
<dbReference type="GO" id="GO:0005829">
    <property type="term" value="C:cytosol"/>
    <property type="evidence" value="ECO:0007669"/>
    <property type="project" value="InterPro"/>
</dbReference>
<dbReference type="GO" id="GO:0016920">
    <property type="term" value="F:pyroglutamyl-peptidase activity"/>
    <property type="evidence" value="ECO:0007669"/>
    <property type="project" value="UniProtKB-UniRule"/>
</dbReference>
<dbReference type="GO" id="GO:0006508">
    <property type="term" value="P:proteolysis"/>
    <property type="evidence" value="ECO:0007669"/>
    <property type="project" value="UniProtKB-KW"/>
</dbReference>
<dbReference type="CDD" id="cd00501">
    <property type="entry name" value="Peptidase_C15"/>
    <property type="match status" value="1"/>
</dbReference>
<dbReference type="FunFam" id="3.40.630.20:FF:000001">
    <property type="entry name" value="Pyrrolidone-carboxylate peptidase"/>
    <property type="match status" value="1"/>
</dbReference>
<dbReference type="Gene3D" id="3.40.630.20">
    <property type="entry name" value="Peptidase C15, pyroglutamyl peptidase I-like"/>
    <property type="match status" value="1"/>
</dbReference>
<dbReference type="HAMAP" id="MF_00417">
    <property type="entry name" value="Pyrrolid_peptidase"/>
    <property type="match status" value="1"/>
</dbReference>
<dbReference type="InterPro" id="IPR000816">
    <property type="entry name" value="Peptidase_C15"/>
</dbReference>
<dbReference type="InterPro" id="IPR016125">
    <property type="entry name" value="Peptidase_C15-like"/>
</dbReference>
<dbReference type="InterPro" id="IPR036440">
    <property type="entry name" value="Peptidase_C15-like_sf"/>
</dbReference>
<dbReference type="InterPro" id="IPR029762">
    <property type="entry name" value="PGP-I_bact-type"/>
</dbReference>
<dbReference type="InterPro" id="IPR033694">
    <property type="entry name" value="PGPEP1_Cys_AS"/>
</dbReference>
<dbReference type="InterPro" id="IPR033693">
    <property type="entry name" value="PGPEP1_Glu_AS"/>
</dbReference>
<dbReference type="NCBIfam" id="NF009676">
    <property type="entry name" value="PRK13197.1"/>
    <property type="match status" value="1"/>
</dbReference>
<dbReference type="NCBIfam" id="TIGR00504">
    <property type="entry name" value="pyro_pdase"/>
    <property type="match status" value="1"/>
</dbReference>
<dbReference type="PANTHER" id="PTHR23402">
    <property type="entry name" value="PROTEASE FAMILY C15 PYROGLUTAMYL-PEPTIDASE I-RELATED"/>
    <property type="match status" value="1"/>
</dbReference>
<dbReference type="PANTHER" id="PTHR23402:SF1">
    <property type="entry name" value="PYROGLUTAMYL-PEPTIDASE I"/>
    <property type="match status" value="1"/>
</dbReference>
<dbReference type="Pfam" id="PF01470">
    <property type="entry name" value="Peptidase_C15"/>
    <property type="match status" value="1"/>
</dbReference>
<dbReference type="PIRSF" id="PIRSF015592">
    <property type="entry name" value="Prld-crbxl_pptds"/>
    <property type="match status" value="1"/>
</dbReference>
<dbReference type="PRINTS" id="PR00706">
    <property type="entry name" value="PYROGLUPTASE"/>
</dbReference>
<dbReference type="SUPFAM" id="SSF53182">
    <property type="entry name" value="Pyrrolidone carboxyl peptidase (pyroglutamate aminopeptidase)"/>
    <property type="match status" value="1"/>
</dbReference>
<dbReference type="PROSITE" id="PS01334">
    <property type="entry name" value="PYRASE_CYS"/>
    <property type="match status" value="1"/>
</dbReference>
<dbReference type="PROSITE" id="PS01333">
    <property type="entry name" value="PYRASE_GLU"/>
    <property type="match status" value="1"/>
</dbReference>
<reference key="1">
    <citation type="journal article" date="1995" name="Gene">
        <title>Isolation and characterization of pcp, a gene encoding a pyrrolidone carboxyl peptidase in Staphylococcus aureus.</title>
        <authorList>
            <person name="Patti J.M."/>
            <person name="Schneider A."/>
            <person name="Garza N."/>
            <person name="Boles J.O."/>
        </authorList>
    </citation>
    <scope>NUCLEOTIDE SEQUENCE [GENOMIC DNA]</scope>
    <source>
        <strain>FDA 574</strain>
    </source>
</reference>
<comment type="function">
    <text>Removes 5-oxoproline from various penultimate amino acid residues except L-proline.</text>
</comment>
<comment type="catalytic activity">
    <reaction>
        <text>Release of an N-terminal pyroglutamyl group from a polypeptide, the second amino acid generally not being Pro.</text>
        <dbReference type="EC" id="3.4.19.3"/>
    </reaction>
</comment>
<comment type="subunit">
    <text evidence="1">Homotetramer.</text>
</comment>
<comment type="subcellular location">
    <subcellularLocation>
        <location>Cytoplasm</location>
    </subcellularLocation>
</comment>
<comment type="similarity">
    <text evidence="2">Belongs to the peptidase C15 family.</text>
</comment>
<name>PCP_STAAU</name>
<gene>
    <name type="primary">pcp</name>
</gene>
<sequence>MHILVTGFAPFDNQDINPSWEAVTQLENIIGTHTIDKLKLPTSFKKVDTIINKTLASNHYDVVLAIGQAGGRNAITPERVAINIDDARIPDNDDFQPIDQAIHLDGAPRYFSNLPVKAMTQSVINQGLPGALSNSAGTFVCNHVLYHLGYLQDKHYPHLRFGFIHVPYIPEQVVGKSDTPSMPLEQIVAGLTAAIEAISDHDDLRIALGTTE</sequence>
<evidence type="ECO:0000250" key="1"/>
<evidence type="ECO:0000305" key="2"/>
<protein>
    <recommendedName>
        <fullName>Pyrrolidone-carboxylate peptidase</fullName>
        <ecNumber>3.4.19.3</ecNumber>
    </recommendedName>
    <alternativeName>
        <fullName>5-oxoprolyl-peptidase</fullName>
    </alternativeName>
    <alternativeName>
        <fullName>Pyroglutamyl-peptidase I</fullName>
        <shortName>PGP-I</shortName>
        <shortName>Pyrase</shortName>
    </alternativeName>
</protein>
<feature type="chain" id="PRO_0000184736" description="Pyrrolidone-carboxylate peptidase">
    <location>
        <begin position="1"/>
        <end position="212"/>
    </location>
</feature>
<feature type="active site" evidence="1">
    <location>
        <position position="78"/>
    </location>
</feature>
<feature type="active site" evidence="1">
    <location>
        <position position="141"/>
    </location>
</feature>
<feature type="active site" evidence="1">
    <location>
        <position position="165"/>
    </location>
</feature>
<keyword id="KW-0963">Cytoplasm</keyword>
<keyword id="KW-0378">Hydrolase</keyword>
<keyword id="KW-0645">Protease</keyword>
<keyword id="KW-0788">Thiol protease</keyword>
<organism>
    <name type="scientific">Staphylococcus aureus</name>
    <dbReference type="NCBI Taxonomy" id="1280"/>
    <lineage>
        <taxon>Bacteria</taxon>
        <taxon>Bacillati</taxon>
        <taxon>Bacillota</taxon>
        <taxon>Bacilli</taxon>
        <taxon>Bacillales</taxon>
        <taxon>Staphylococcaceae</taxon>
        <taxon>Staphylococcus</taxon>
    </lineage>
</organism>
<accession>Q53596</accession>
<proteinExistence type="inferred from homology"/>